<gene>
    <name evidence="1" type="primary">moaC</name>
    <name type="ordered locus">RB7175</name>
</gene>
<accession>Q7UP45</accession>
<sequence>MKPDPRSTHFNAAGEVHMVDVTGKDITVREAVASARIHMSADAAEAIRRGDTKKGDVLAVARLAGIAGAKWTSHLIPLCHAIPIEAVSIDFDWVDESDSDDDAVANQTLRCTATARTTAKTGIEMESLTAASTAALTVYDMLKSVDRAMVIDQVRLESKSGGKSGDFRRDTGDKA</sequence>
<feature type="chain" id="PRO_0000227027" description="Cyclic pyranopterin monophosphate synthase">
    <location>
        <begin position="1"/>
        <end position="175"/>
    </location>
</feature>
<feature type="active site" evidence="1">
    <location>
        <position position="140"/>
    </location>
</feature>
<feature type="binding site" evidence="1">
    <location>
        <begin position="78"/>
        <end position="80"/>
    </location>
    <ligand>
        <name>substrate</name>
    </ligand>
</feature>
<feature type="binding site" evidence="1">
    <location>
        <begin position="125"/>
        <end position="126"/>
    </location>
    <ligand>
        <name>substrate</name>
    </ligand>
</feature>
<proteinExistence type="inferred from homology"/>
<comment type="function">
    <text evidence="1">Catalyzes the conversion of (8S)-3',8-cyclo-7,8-dihydroguanosine 5'-triphosphate to cyclic pyranopterin monophosphate (cPMP).</text>
</comment>
<comment type="catalytic activity">
    <reaction evidence="1">
        <text>(8S)-3',8-cyclo-7,8-dihydroguanosine 5'-triphosphate = cyclic pyranopterin phosphate + diphosphate</text>
        <dbReference type="Rhea" id="RHEA:49580"/>
        <dbReference type="ChEBI" id="CHEBI:33019"/>
        <dbReference type="ChEBI" id="CHEBI:59648"/>
        <dbReference type="ChEBI" id="CHEBI:131766"/>
        <dbReference type="EC" id="4.6.1.17"/>
    </reaction>
</comment>
<comment type="pathway">
    <text evidence="1">Cofactor biosynthesis; molybdopterin biosynthesis.</text>
</comment>
<comment type="subunit">
    <text evidence="1">Homohexamer; trimer of dimers.</text>
</comment>
<comment type="similarity">
    <text evidence="1">Belongs to the MoaC family.</text>
</comment>
<comment type="sequence caution" evidence="2">
    <conflict type="erroneous initiation">
        <sequence resource="EMBL-CDS" id="CAD75220"/>
    </conflict>
</comment>
<evidence type="ECO:0000255" key="1">
    <source>
        <dbReference type="HAMAP-Rule" id="MF_01224"/>
    </source>
</evidence>
<evidence type="ECO:0000305" key="2"/>
<protein>
    <recommendedName>
        <fullName evidence="1">Cyclic pyranopterin monophosphate synthase</fullName>
        <ecNumber evidence="1">4.6.1.17</ecNumber>
    </recommendedName>
    <alternativeName>
        <fullName evidence="1">Molybdenum cofactor biosynthesis protein C</fullName>
    </alternativeName>
</protein>
<reference key="1">
    <citation type="journal article" date="2003" name="Proc. Natl. Acad. Sci. U.S.A.">
        <title>Complete genome sequence of the marine planctomycete Pirellula sp. strain 1.</title>
        <authorList>
            <person name="Gloeckner F.O."/>
            <person name="Kube M."/>
            <person name="Bauer M."/>
            <person name="Teeling H."/>
            <person name="Lombardot T."/>
            <person name="Ludwig W."/>
            <person name="Gade D."/>
            <person name="Beck A."/>
            <person name="Borzym K."/>
            <person name="Heitmann K."/>
            <person name="Rabus R."/>
            <person name="Schlesner H."/>
            <person name="Amann R."/>
            <person name="Reinhardt R."/>
        </authorList>
    </citation>
    <scope>NUCLEOTIDE SEQUENCE [LARGE SCALE GENOMIC DNA]</scope>
    <source>
        <strain>DSM 10527 / NCIMB 13988 / SH1</strain>
    </source>
</reference>
<keyword id="KW-0456">Lyase</keyword>
<keyword id="KW-0501">Molybdenum cofactor biosynthesis</keyword>
<keyword id="KW-1185">Reference proteome</keyword>
<organism>
    <name type="scientific">Rhodopirellula baltica (strain DSM 10527 / NCIMB 13988 / SH1)</name>
    <dbReference type="NCBI Taxonomy" id="243090"/>
    <lineage>
        <taxon>Bacteria</taxon>
        <taxon>Pseudomonadati</taxon>
        <taxon>Planctomycetota</taxon>
        <taxon>Planctomycetia</taxon>
        <taxon>Pirellulales</taxon>
        <taxon>Pirellulaceae</taxon>
        <taxon>Rhodopirellula</taxon>
    </lineage>
</organism>
<name>MOAC_RHOBA</name>
<dbReference type="EC" id="4.6.1.17" evidence="1"/>
<dbReference type="EMBL" id="BX294145">
    <property type="protein sequence ID" value="CAD75220.1"/>
    <property type="status" value="ALT_INIT"/>
    <property type="molecule type" value="Genomic_DNA"/>
</dbReference>
<dbReference type="RefSeq" id="NP_867673.1">
    <property type="nucleotide sequence ID" value="NC_005027.1"/>
</dbReference>
<dbReference type="RefSeq" id="WP_164922043.1">
    <property type="nucleotide sequence ID" value="NC_005027.1"/>
</dbReference>
<dbReference type="SMR" id="Q7UP45"/>
<dbReference type="FunCoup" id="Q7UP45">
    <property type="interactions" value="299"/>
</dbReference>
<dbReference type="STRING" id="243090.RB7175"/>
<dbReference type="EnsemblBacteria" id="CAD75220">
    <property type="protein sequence ID" value="CAD75220"/>
    <property type="gene ID" value="RB7175"/>
</dbReference>
<dbReference type="KEGG" id="rba:RB7175"/>
<dbReference type="PATRIC" id="fig|243090.15.peg.3474"/>
<dbReference type="eggNOG" id="COG0315">
    <property type="taxonomic scope" value="Bacteria"/>
</dbReference>
<dbReference type="HOGENOM" id="CLU_074693_1_1_0"/>
<dbReference type="InParanoid" id="Q7UP45"/>
<dbReference type="OrthoDB" id="9794429at2"/>
<dbReference type="UniPathway" id="UPA00344"/>
<dbReference type="Proteomes" id="UP000001025">
    <property type="component" value="Chromosome"/>
</dbReference>
<dbReference type="GO" id="GO:0061799">
    <property type="term" value="F:cyclic pyranopterin monophosphate synthase activity"/>
    <property type="evidence" value="ECO:0007669"/>
    <property type="project" value="UniProtKB-UniRule"/>
</dbReference>
<dbReference type="GO" id="GO:0006777">
    <property type="term" value="P:Mo-molybdopterin cofactor biosynthetic process"/>
    <property type="evidence" value="ECO:0007669"/>
    <property type="project" value="UniProtKB-UniRule"/>
</dbReference>
<dbReference type="CDD" id="cd01420">
    <property type="entry name" value="MoaC_PE"/>
    <property type="match status" value="1"/>
</dbReference>
<dbReference type="Gene3D" id="3.30.70.640">
    <property type="entry name" value="Molybdopterin cofactor biosynthesis C (MoaC) domain"/>
    <property type="match status" value="1"/>
</dbReference>
<dbReference type="HAMAP" id="MF_01224_B">
    <property type="entry name" value="MoaC_B"/>
    <property type="match status" value="1"/>
</dbReference>
<dbReference type="InterPro" id="IPR023045">
    <property type="entry name" value="MoaC"/>
</dbReference>
<dbReference type="InterPro" id="IPR047594">
    <property type="entry name" value="MoaC_bact/euk"/>
</dbReference>
<dbReference type="InterPro" id="IPR036522">
    <property type="entry name" value="MoaC_sf"/>
</dbReference>
<dbReference type="InterPro" id="IPR050105">
    <property type="entry name" value="MoCo_biosynth_MoaA/MoaC"/>
</dbReference>
<dbReference type="InterPro" id="IPR002820">
    <property type="entry name" value="Mopterin_CF_biosynth-C_dom"/>
</dbReference>
<dbReference type="NCBIfam" id="TIGR00581">
    <property type="entry name" value="moaC"/>
    <property type="match status" value="1"/>
</dbReference>
<dbReference type="NCBIfam" id="NF006870">
    <property type="entry name" value="PRK09364.1"/>
    <property type="match status" value="1"/>
</dbReference>
<dbReference type="PANTHER" id="PTHR22960:SF29">
    <property type="entry name" value="CYCLIC PYRANOPTERIN MONOPHOSPHATE SYNTHASE"/>
    <property type="match status" value="1"/>
</dbReference>
<dbReference type="PANTHER" id="PTHR22960">
    <property type="entry name" value="MOLYBDOPTERIN COFACTOR SYNTHESIS PROTEIN A"/>
    <property type="match status" value="1"/>
</dbReference>
<dbReference type="Pfam" id="PF01967">
    <property type="entry name" value="MoaC"/>
    <property type="match status" value="1"/>
</dbReference>
<dbReference type="SUPFAM" id="SSF55040">
    <property type="entry name" value="Molybdenum cofactor biosynthesis protein C, MoaC"/>
    <property type="match status" value="1"/>
</dbReference>